<name>Y1103_DEHMB</name>
<feature type="chain" id="PRO_1000082639" description="UPF0235 protein DehaBAV1_1103">
    <location>
        <begin position="1"/>
        <end position="97"/>
    </location>
</feature>
<sequence>MPPKESPFKVNLKIIPSARKNELAGYENGLLKLKIAAQPEKGKANKELIDYLSDLLDTPKAEIEICHGHTGRNKVLAFFTLSQADFEAKISAALHGS</sequence>
<evidence type="ECO:0000255" key="1">
    <source>
        <dbReference type="HAMAP-Rule" id="MF_00634"/>
    </source>
</evidence>
<gene>
    <name type="ordered locus">DehaBAV1_1103</name>
</gene>
<proteinExistence type="inferred from homology"/>
<organism>
    <name type="scientific">Dehalococcoides mccartyi (strain ATCC BAA-2100 / JCM 16839 / KCTC 5957 / BAV1)</name>
    <dbReference type="NCBI Taxonomy" id="216389"/>
    <lineage>
        <taxon>Bacteria</taxon>
        <taxon>Bacillati</taxon>
        <taxon>Chloroflexota</taxon>
        <taxon>Dehalococcoidia</taxon>
        <taxon>Dehalococcoidales</taxon>
        <taxon>Dehalococcoidaceae</taxon>
        <taxon>Dehalococcoides</taxon>
    </lineage>
</organism>
<protein>
    <recommendedName>
        <fullName evidence="1">UPF0235 protein DehaBAV1_1103</fullName>
    </recommendedName>
</protein>
<dbReference type="EMBL" id="CP000688">
    <property type="protein sequence ID" value="ABQ17683.1"/>
    <property type="molecule type" value="Genomic_DNA"/>
</dbReference>
<dbReference type="SMR" id="A5FQ39"/>
<dbReference type="KEGG" id="deb:DehaBAV1_1103"/>
<dbReference type="PATRIC" id="fig|216389.18.peg.1165"/>
<dbReference type="HOGENOM" id="CLU_130694_6_2_0"/>
<dbReference type="GO" id="GO:0005737">
    <property type="term" value="C:cytoplasm"/>
    <property type="evidence" value="ECO:0007669"/>
    <property type="project" value="TreeGrafter"/>
</dbReference>
<dbReference type="Gene3D" id="3.30.1200.10">
    <property type="entry name" value="YggU-like"/>
    <property type="match status" value="1"/>
</dbReference>
<dbReference type="HAMAP" id="MF_00634">
    <property type="entry name" value="UPF0235"/>
    <property type="match status" value="1"/>
</dbReference>
<dbReference type="InterPro" id="IPR003746">
    <property type="entry name" value="DUF167"/>
</dbReference>
<dbReference type="InterPro" id="IPR036591">
    <property type="entry name" value="YggU-like_sf"/>
</dbReference>
<dbReference type="NCBIfam" id="TIGR00251">
    <property type="entry name" value="DUF167 family protein"/>
    <property type="match status" value="1"/>
</dbReference>
<dbReference type="PANTHER" id="PTHR13420">
    <property type="entry name" value="UPF0235 PROTEIN C15ORF40"/>
    <property type="match status" value="1"/>
</dbReference>
<dbReference type="PANTHER" id="PTHR13420:SF7">
    <property type="entry name" value="UPF0235 PROTEIN C15ORF40"/>
    <property type="match status" value="1"/>
</dbReference>
<dbReference type="Pfam" id="PF02594">
    <property type="entry name" value="DUF167"/>
    <property type="match status" value="1"/>
</dbReference>
<dbReference type="SMART" id="SM01152">
    <property type="entry name" value="DUF167"/>
    <property type="match status" value="1"/>
</dbReference>
<dbReference type="SUPFAM" id="SSF69786">
    <property type="entry name" value="YggU-like"/>
    <property type="match status" value="1"/>
</dbReference>
<accession>A5FQ39</accession>
<reference key="1">
    <citation type="submission" date="2007-05" db="EMBL/GenBank/DDBJ databases">
        <title>Complete sequence of Dehalococcoides sp. BAV1.</title>
        <authorList>
            <consortium name="US DOE Joint Genome Institute"/>
            <person name="Copeland A."/>
            <person name="Lucas S."/>
            <person name="Lapidus A."/>
            <person name="Barry K."/>
            <person name="Detter J.C."/>
            <person name="Glavina del Rio T."/>
            <person name="Hammon N."/>
            <person name="Israni S."/>
            <person name="Pitluck S."/>
            <person name="Lowry S."/>
            <person name="Clum A."/>
            <person name="Schmutz J."/>
            <person name="Larimer F."/>
            <person name="Land M."/>
            <person name="Hauser L."/>
            <person name="Kyrpides N."/>
            <person name="Kim E."/>
            <person name="Ritalahti K.M."/>
            <person name="Loeffler F."/>
            <person name="Richardson P."/>
        </authorList>
    </citation>
    <scope>NUCLEOTIDE SEQUENCE [LARGE SCALE GENOMIC DNA]</scope>
    <source>
        <strain>ATCC BAA-2100 / JCM 16839 / KCTC 5957 / BAV1</strain>
    </source>
</reference>
<comment type="similarity">
    <text evidence="1">Belongs to the UPF0235 family.</text>
</comment>